<comment type="function">
    <text evidence="1">Transfers a phosphoglycerol residue from phosphatidylglycerol to the membrane-bound nascent glucan backbones.</text>
</comment>
<comment type="catalytic activity">
    <reaction evidence="1">
        <text>a phosphatidylglycerol + a membrane-derived-oligosaccharide D-glucose = a 1,2-diacyl-sn-glycerol + a membrane-derived-oligosaccharide 6-(glycerophospho)-D-glucose.</text>
        <dbReference type="EC" id="2.7.8.20"/>
    </reaction>
</comment>
<comment type="pathway">
    <text evidence="1">Glycan metabolism; osmoregulated periplasmic glucan (OPG) biosynthesis.</text>
</comment>
<comment type="subcellular location">
    <subcellularLocation>
        <location evidence="1">Cell inner membrane</location>
        <topology evidence="1">Multi-pass membrane protein</topology>
    </subcellularLocation>
</comment>
<comment type="similarity">
    <text evidence="1">Belongs to the OpgB family.</text>
</comment>
<evidence type="ECO:0000255" key="1">
    <source>
        <dbReference type="HAMAP-Rule" id="MF_01070"/>
    </source>
</evidence>
<sequence length="763" mass="85494">MSELLSFALFLASVLIYAWKAGRNTWWFAATLTVLGLFVVLNITLFASDYFTGDGINDAVLYTLTNSLTGAGVSKYILPGIGIVLGLTAVFGALGWILRRRRHHPHHFGYSLLALLLALGSVDASPAFRQITELVKSQSRDGDPDFAAYYKEPSKTIPDPKLNLVYIYGESLERTYFDNEAFPDLTPELGALKNEGLDFSHTQQLPGTDYTIAGMVASQCGIPLFAPFEGNASASVSSFFPQNICLGDILKNSGYQNYFVQGANLRFAGKDVFLKSHGFDHLYGSEELKSVVADPHYRNDWGFYDDTVLDEAWKKFEELSRSSQRFSLFTLTVDTHHPDGFISRTCNRKKYDFDGKPNQSFSAVSCSQENIAAFINKIKASPWFKDTVIVVSSDHLAMNNTAWKYLNKQDRNNLFFVIRGDKPQQETLAVKRNTMDNGATVLDILGGDNYLGLGRSSLSGQSMSEIFLNIKEKTLAWKPDIIRLWKFPKEMKEFTIDQQKNMIAFSGSHFRLPLLLRVSDKRVEPLPESEYSAPLRFQLADFAPRDNFVWVDRCYKMAQLWAPELALSTDWCVSQGQLGGQQIVQHVDKTTWQGKTAFKDTVIDMARYKGNVDTLKIVDNDIRYKADSFIFNVAGAPEEVKQFSGISRPESWGRWSNAQLGDEVKIEYKHPLPKKFDLVITAKAYGNNASRPIPVRVGNEEQTLVLGNEVTTTTLHFDNPTDADTLVIVPPEPVSTNEGNILGHSPRKLGIGMVEIKVVEREG</sequence>
<keyword id="KW-0997">Cell inner membrane</keyword>
<keyword id="KW-1003">Cell membrane</keyword>
<keyword id="KW-0472">Membrane</keyword>
<keyword id="KW-1185">Reference proteome</keyword>
<keyword id="KW-0808">Transferase</keyword>
<keyword id="KW-0812">Transmembrane</keyword>
<keyword id="KW-1133">Transmembrane helix</keyword>
<dbReference type="EC" id="2.7.8.20" evidence="1"/>
<dbReference type="EMBL" id="CU928145">
    <property type="protein sequence ID" value="CAV02143.1"/>
    <property type="molecule type" value="Genomic_DNA"/>
</dbReference>
<dbReference type="RefSeq" id="WP_001292687.1">
    <property type="nucleotide sequence ID" value="NC_011748.1"/>
</dbReference>
<dbReference type="SMR" id="B7LE10"/>
<dbReference type="KEGG" id="eck:EC55989_5021"/>
<dbReference type="HOGENOM" id="CLU_023986_1_0_6"/>
<dbReference type="UniPathway" id="UPA00637"/>
<dbReference type="Proteomes" id="UP000000746">
    <property type="component" value="Chromosome"/>
</dbReference>
<dbReference type="GO" id="GO:0005886">
    <property type="term" value="C:plasma membrane"/>
    <property type="evidence" value="ECO:0007669"/>
    <property type="project" value="UniProtKB-SubCell"/>
</dbReference>
<dbReference type="GO" id="GO:0008960">
    <property type="term" value="F:phosphatidylglycerol-membrane-oligosaccharide glycerophosphotransferase activity"/>
    <property type="evidence" value="ECO:0007669"/>
    <property type="project" value="UniProtKB-UniRule"/>
</dbReference>
<dbReference type="GO" id="GO:0009250">
    <property type="term" value="P:glucan biosynthetic process"/>
    <property type="evidence" value="ECO:0007669"/>
    <property type="project" value="UniProtKB-UniRule"/>
</dbReference>
<dbReference type="CDD" id="cd16015">
    <property type="entry name" value="LTA_synthase"/>
    <property type="match status" value="1"/>
</dbReference>
<dbReference type="FunFam" id="3.40.720.10:FF:000009">
    <property type="entry name" value="Phosphoglycerol transferase I"/>
    <property type="match status" value="1"/>
</dbReference>
<dbReference type="Gene3D" id="3.40.720.10">
    <property type="entry name" value="Alkaline Phosphatase, subunit A"/>
    <property type="match status" value="1"/>
</dbReference>
<dbReference type="HAMAP" id="MF_01070">
    <property type="entry name" value="MdoB_OpgB"/>
    <property type="match status" value="1"/>
</dbReference>
<dbReference type="InterPro" id="IPR017850">
    <property type="entry name" value="Alkaline_phosphatase_core_sf"/>
</dbReference>
<dbReference type="InterPro" id="IPR054288">
    <property type="entry name" value="DUF7024"/>
</dbReference>
<dbReference type="InterPro" id="IPR020881">
    <property type="entry name" value="OpgB"/>
</dbReference>
<dbReference type="InterPro" id="IPR050448">
    <property type="entry name" value="OpgB/LTA_synthase_biosynth"/>
</dbReference>
<dbReference type="InterPro" id="IPR000917">
    <property type="entry name" value="Sulfatase_N"/>
</dbReference>
<dbReference type="NCBIfam" id="NF003000">
    <property type="entry name" value="PRK03776.1"/>
    <property type="match status" value="1"/>
</dbReference>
<dbReference type="PANTHER" id="PTHR47371">
    <property type="entry name" value="LIPOTEICHOIC ACID SYNTHASE"/>
    <property type="match status" value="1"/>
</dbReference>
<dbReference type="PANTHER" id="PTHR47371:SF3">
    <property type="entry name" value="PHOSPHOGLYCEROL TRANSFERASE I"/>
    <property type="match status" value="1"/>
</dbReference>
<dbReference type="Pfam" id="PF22895">
    <property type="entry name" value="DUF7024"/>
    <property type="match status" value="1"/>
</dbReference>
<dbReference type="Pfam" id="PF00884">
    <property type="entry name" value="Sulfatase"/>
    <property type="match status" value="1"/>
</dbReference>
<dbReference type="SUPFAM" id="SSF53649">
    <property type="entry name" value="Alkaline phosphatase-like"/>
    <property type="match status" value="1"/>
</dbReference>
<proteinExistence type="inferred from homology"/>
<name>OPGB_ECO55</name>
<reference key="1">
    <citation type="journal article" date="2009" name="PLoS Genet.">
        <title>Organised genome dynamics in the Escherichia coli species results in highly diverse adaptive paths.</title>
        <authorList>
            <person name="Touchon M."/>
            <person name="Hoede C."/>
            <person name="Tenaillon O."/>
            <person name="Barbe V."/>
            <person name="Baeriswyl S."/>
            <person name="Bidet P."/>
            <person name="Bingen E."/>
            <person name="Bonacorsi S."/>
            <person name="Bouchier C."/>
            <person name="Bouvet O."/>
            <person name="Calteau A."/>
            <person name="Chiapello H."/>
            <person name="Clermont O."/>
            <person name="Cruveiller S."/>
            <person name="Danchin A."/>
            <person name="Diard M."/>
            <person name="Dossat C."/>
            <person name="Karoui M.E."/>
            <person name="Frapy E."/>
            <person name="Garry L."/>
            <person name="Ghigo J.M."/>
            <person name="Gilles A.M."/>
            <person name="Johnson J."/>
            <person name="Le Bouguenec C."/>
            <person name="Lescat M."/>
            <person name="Mangenot S."/>
            <person name="Martinez-Jehanne V."/>
            <person name="Matic I."/>
            <person name="Nassif X."/>
            <person name="Oztas S."/>
            <person name="Petit M.A."/>
            <person name="Pichon C."/>
            <person name="Rouy Z."/>
            <person name="Ruf C.S."/>
            <person name="Schneider D."/>
            <person name="Tourret J."/>
            <person name="Vacherie B."/>
            <person name="Vallenet D."/>
            <person name="Medigue C."/>
            <person name="Rocha E.P.C."/>
            <person name="Denamur E."/>
        </authorList>
    </citation>
    <scope>NUCLEOTIDE SEQUENCE [LARGE SCALE GENOMIC DNA]</scope>
    <source>
        <strain>55989 / EAEC</strain>
    </source>
</reference>
<feature type="chain" id="PRO_1000149751" description="Phosphoglycerol transferase I">
    <location>
        <begin position="1"/>
        <end position="763"/>
    </location>
</feature>
<feature type="transmembrane region" description="Helical" evidence="1">
    <location>
        <begin position="1"/>
        <end position="21"/>
    </location>
</feature>
<feature type="transmembrane region" description="Helical" evidence="1">
    <location>
        <begin position="26"/>
        <end position="46"/>
    </location>
</feature>
<feature type="transmembrane region" description="Helical" evidence="1">
    <location>
        <begin position="77"/>
        <end position="97"/>
    </location>
</feature>
<feature type="transmembrane region" description="Helical" evidence="1">
    <location>
        <begin position="108"/>
        <end position="128"/>
    </location>
</feature>
<organism>
    <name type="scientific">Escherichia coli (strain 55989 / EAEC)</name>
    <dbReference type="NCBI Taxonomy" id="585055"/>
    <lineage>
        <taxon>Bacteria</taxon>
        <taxon>Pseudomonadati</taxon>
        <taxon>Pseudomonadota</taxon>
        <taxon>Gammaproteobacteria</taxon>
        <taxon>Enterobacterales</taxon>
        <taxon>Enterobacteriaceae</taxon>
        <taxon>Escherichia</taxon>
    </lineage>
</organism>
<gene>
    <name evidence="1" type="primary">mdoB</name>
    <name evidence="1" type="synonym">opgB</name>
    <name type="ordered locus">EC55989_5021</name>
</gene>
<protein>
    <recommendedName>
        <fullName evidence="1">Phosphoglycerol transferase I</fullName>
        <ecNumber evidence="1">2.7.8.20</ecNumber>
    </recommendedName>
    <alternativeName>
        <fullName evidence="1">Phosphatidylglycerol--membrane-oligosaccharide glycerophosphotransferase</fullName>
    </alternativeName>
</protein>
<accession>B7LE10</accession>